<name>RS19_CHLPM</name>
<accession>A4SCR3</accession>
<protein>
    <recommendedName>
        <fullName evidence="1">Small ribosomal subunit protein uS19</fullName>
    </recommendedName>
    <alternativeName>
        <fullName evidence="3">30S ribosomal protein S19</fullName>
    </alternativeName>
</protein>
<reference key="1">
    <citation type="submission" date="2007-03" db="EMBL/GenBank/DDBJ databases">
        <title>Complete sequence of Prosthecochloris vibrioformis DSM 265.</title>
        <authorList>
            <consortium name="US DOE Joint Genome Institute"/>
            <person name="Copeland A."/>
            <person name="Lucas S."/>
            <person name="Lapidus A."/>
            <person name="Barry K."/>
            <person name="Detter J.C."/>
            <person name="Glavina del Rio T."/>
            <person name="Hammon N."/>
            <person name="Israni S."/>
            <person name="Pitluck S."/>
            <person name="Schmutz J."/>
            <person name="Larimer F."/>
            <person name="Land M."/>
            <person name="Hauser L."/>
            <person name="Mikhailova N."/>
            <person name="Li T."/>
            <person name="Overmann J."/>
            <person name="Schuster S.C."/>
            <person name="Bryant D.A."/>
            <person name="Richardson P."/>
        </authorList>
    </citation>
    <scope>NUCLEOTIDE SEQUENCE [LARGE SCALE GENOMIC DNA]</scope>
    <source>
        <strain>DSM 265 / 1930</strain>
    </source>
</reference>
<comment type="function">
    <text evidence="1">Protein S19 forms a complex with S13 that binds strongly to the 16S ribosomal RNA.</text>
</comment>
<comment type="similarity">
    <text evidence="1">Belongs to the universal ribosomal protein uS19 family.</text>
</comment>
<feature type="chain" id="PRO_1000081784" description="Small ribosomal subunit protein uS19">
    <location>
        <begin position="1"/>
        <end position="98"/>
    </location>
</feature>
<feature type="region of interest" description="Disordered" evidence="2">
    <location>
        <begin position="77"/>
        <end position="98"/>
    </location>
</feature>
<evidence type="ECO:0000255" key="1">
    <source>
        <dbReference type="HAMAP-Rule" id="MF_00531"/>
    </source>
</evidence>
<evidence type="ECO:0000256" key="2">
    <source>
        <dbReference type="SAM" id="MobiDB-lite"/>
    </source>
</evidence>
<evidence type="ECO:0000305" key="3"/>
<dbReference type="EMBL" id="CP000607">
    <property type="protein sequence ID" value="ABP36272.1"/>
    <property type="molecule type" value="Genomic_DNA"/>
</dbReference>
<dbReference type="SMR" id="A4SCR3"/>
<dbReference type="STRING" id="290318.Cvib_0250"/>
<dbReference type="KEGG" id="pvi:Cvib_0250"/>
<dbReference type="eggNOG" id="COG0185">
    <property type="taxonomic scope" value="Bacteria"/>
</dbReference>
<dbReference type="HOGENOM" id="CLU_144911_0_1_10"/>
<dbReference type="OrthoDB" id="9797833at2"/>
<dbReference type="GO" id="GO:0005737">
    <property type="term" value="C:cytoplasm"/>
    <property type="evidence" value="ECO:0007669"/>
    <property type="project" value="UniProtKB-ARBA"/>
</dbReference>
<dbReference type="GO" id="GO:0015935">
    <property type="term" value="C:small ribosomal subunit"/>
    <property type="evidence" value="ECO:0007669"/>
    <property type="project" value="InterPro"/>
</dbReference>
<dbReference type="GO" id="GO:0019843">
    <property type="term" value="F:rRNA binding"/>
    <property type="evidence" value="ECO:0007669"/>
    <property type="project" value="UniProtKB-UniRule"/>
</dbReference>
<dbReference type="GO" id="GO:0003735">
    <property type="term" value="F:structural constituent of ribosome"/>
    <property type="evidence" value="ECO:0007669"/>
    <property type="project" value="InterPro"/>
</dbReference>
<dbReference type="GO" id="GO:0000028">
    <property type="term" value="P:ribosomal small subunit assembly"/>
    <property type="evidence" value="ECO:0007669"/>
    <property type="project" value="TreeGrafter"/>
</dbReference>
<dbReference type="GO" id="GO:0006412">
    <property type="term" value="P:translation"/>
    <property type="evidence" value="ECO:0007669"/>
    <property type="project" value="UniProtKB-UniRule"/>
</dbReference>
<dbReference type="FunFam" id="3.30.860.10:FF:000001">
    <property type="entry name" value="30S ribosomal protein S19"/>
    <property type="match status" value="1"/>
</dbReference>
<dbReference type="Gene3D" id="3.30.860.10">
    <property type="entry name" value="30s Ribosomal Protein S19, Chain A"/>
    <property type="match status" value="1"/>
</dbReference>
<dbReference type="HAMAP" id="MF_00531">
    <property type="entry name" value="Ribosomal_uS19"/>
    <property type="match status" value="1"/>
</dbReference>
<dbReference type="InterPro" id="IPR002222">
    <property type="entry name" value="Ribosomal_uS19"/>
</dbReference>
<dbReference type="InterPro" id="IPR005732">
    <property type="entry name" value="Ribosomal_uS19_bac-type"/>
</dbReference>
<dbReference type="InterPro" id="IPR020934">
    <property type="entry name" value="Ribosomal_uS19_CS"/>
</dbReference>
<dbReference type="InterPro" id="IPR023575">
    <property type="entry name" value="Ribosomal_uS19_SF"/>
</dbReference>
<dbReference type="NCBIfam" id="TIGR01050">
    <property type="entry name" value="rpsS_bact"/>
    <property type="match status" value="1"/>
</dbReference>
<dbReference type="PANTHER" id="PTHR11880">
    <property type="entry name" value="RIBOSOMAL PROTEIN S19P FAMILY MEMBER"/>
    <property type="match status" value="1"/>
</dbReference>
<dbReference type="PANTHER" id="PTHR11880:SF8">
    <property type="entry name" value="SMALL RIBOSOMAL SUBUNIT PROTEIN US19M"/>
    <property type="match status" value="1"/>
</dbReference>
<dbReference type="Pfam" id="PF00203">
    <property type="entry name" value="Ribosomal_S19"/>
    <property type="match status" value="1"/>
</dbReference>
<dbReference type="PIRSF" id="PIRSF002144">
    <property type="entry name" value="Ribosomal_S19"/>
    <property type="match status" value="1"/>
</dbReference>
<dbReference type="PRINTS" id="PR00975">
    <property type="entry name" value="RIBOSOMALS19"/>
</dbReference>
<dbReference type="SUPFAM" id="SSF54570">
    <property type="entry name" value="Ribosomal protein S19"/>
    <property type="match status" value="1"/>
</dbReference>
<dbReference type="PROSITE" id="PS00323">
    <property type="entry name" value="RIBOSOMAL_S19"/>
    <property type="match status" value="1"/>
</dbReference>
<organism>
    <name type="scientific">Chlorobium phaeovibrioides (strain DSM 265 / 1930)</name>
    <name type="common">Prosthecochloris vibrioformis (strain DSM 265)</name>
    <dbReference type="NCBI Taxonomy" id="290318"/>
    <lineage>
        <taxon>Bacteria</taxon>
        <taxon>Pseudomonadati</taxon>
        <taxon>Chlorobiota</taxon>
        <taxon>Chlorobiia</taxon>
        <taxon>Chlorobiales</taxon>
        <taxon>Chlorobiaceae</taxon>
        <taxon>Chlorobium/Pelodictyon group</taxon>
        <taxon>Chlorobium</taxon>
    </lineage>
</organism>
<gene>
    <name evidence="1" type="primary">rpsS</name>
    <name type="ordered locus">Cvib_0250</name>
</gene>
<proteinExistence type="inferred from homology"/>
<sequence length="98" mass="10885">MPRSLKKGPYIDIKLERRVLDMNSRGEKKVLKTWCRSSMISPDFVGHTIAVHNGKTHVPVYVSDNMVGHKLGEFAPTRTYRGHAGGKAEKGGAAPKRK</sequence>
<keyword id="KW-0687">Ribonucleoprotein</keyword>
<keyword id="KW-0689">Ribosomal protein</keyword>
<keyword id="KW-0694">RNA-binding</keyword>
<keyword id="KW-0699">rRNA-binding</keyword>